<accession>Q16AM6</accession>
<evidence type="ECO:0000250" key="1"/>
<evidence type="ECO:0000255" key="2"/>
<evidence type="ECO:0000305" key="3"/>
<protein>
    <recommendedName>
        <fullName>ATP synthase subunit b 2</fullName>
    </recommendedName>
    <alternativeName>
        <fullName>ATP synthase F(0) sector subunit b 2</fullName>
    </alternativeName>
    <alternativeName>
        <fullName>ATPase subunit I 2</fullName>
    </alternativeName>
    <alternativeName>
        <fullName>F-type ATPase subunit b 2</fullName>
        <shortName>F-ATPase subunit b 2</shortName>
    </alternativeName>
</protein>
<dbReference type="EMBL" id="CP000362">
    <property type="protein sequence ID" value="ABG30967.1"/>
    <property type="molecule type" value="Genomic_DNA"/>
</dbReference>
<dbReference type="RefSeq" id="WP_011567587.1">
    <property type="nucleotide sequence ID" value="NC_008209.1"/>
</dbReference>
<dbReference type="SMR" id="Q16AM6"/>
<dbReference type="STRING" id="375451.RD1_1324"/>
<dbReference type="KEGG" id="rde:RD1_1324"/>
<dbReference type="eggNOG" id="COG0711">
    <property type="taxonomic scope" value="Bacteria"/>
</dbReference>
<dbReference type="HOGENOM" id="CLU_079215_1_0_5"/>
<dbReference type="OrthoDB" id="9805716at2"/>
<dbReference type="Proteomes" id="UP000007029">
    <property type="component" value="Chromosome"/>
</dbReference>
<dbReference type="GO" id="GO:0005886">
    <property type="term" value="C:plasma membrane"/>
    <property type="evidence" value="ECO:0007669"/>
    <property type="project" value="UniProtKB-SubCell"/>
</dbReference>
<dbReference type="GO" id="GO:0045259">
    <property type="term" value="C:proton-transporting ATP synthase complex"/>
    <property type="evidence" value="ECO:0007669"/>
    <property type="project" value="UniProtKB-KW"/>
</dbReference>
<dbReference type="GO" id="GO:0046933">
    <property type="term" value="F:proton-transporting ATP synthase activity, rotational mechanism"/>
    <property type="evidence" value="ECO:0007669"/>
    <property type="project" value="UniProtKB-UniRule"/>
</dbReference>
<dbReference type="GO" id="GO:0046961">
    <property type="term" value="F:proton-transporting ATPase activity, rotational mechanism"/>
    <property type="evidence" value="ECO:0007669"/>
    <property type="project" value="TreeGrafter"/>
</dbReference>
<dbReference type="CDD" id="cd06503">
    <property type="entry name" value="ATP-synt_Fo_b"/>
    <property type="match status" value="1"/>
</dbReference>
<dbReference type="Gene3D" id="6.10.250.1580">
    <property type="match status" value="1"/>
</dbReference>
<dbReference type="HAMAP" id="MF_01398">
    <property type="entry name" value="ATP_synth_b_bprime"/>
    <property type="match status" value="1"/>
</dbReference>
<dbReference type="InterPro" id="IPR002146">
    <property type="entry name" value="ATP_synth_b/b'su_bac/chlpt"/>
</dbReference>
<dbReference type="InterPro" id="IPR050059">
    <property type="entry name" value="ATP_synthase_B_chain"/>
</dbReference>
<dbReference type="NCBIfam" id="NF009988">
    <property type="entry name" value="PRK13454.1"/>
    <property type="match status" value="1"/>
</dbReference>
<dbReference type="PANTHER" id="PTHR33445:SF1">
    <property type="entry name" value="ATP SYNTHASE SUBUNIT B"/>
    <property type="match status" value="1"/>
</dbReference>
<dbReference type="PANTHER" id="PTHR33445">
    <property type="entry name" value="ATP SYNTHASE SUBUNIT B', CHLOROPLASTIC"/>
    <property type="match status" value="1"/>
</dbReference>
<dbReference type="Pfam" id="PF00430">
    <property type="entry name" value="ATP-synt_B"/>
    <property type="match status" value="1"/>
</dbReference>
<comment type="function">
    <text evidence="1">F(1)F(0) ATP synthase produces ATP from ADP in the presence of a proton or sodium gradient. F-type ATPases consist of two structural domains, F(1) containing the extramembraneous catalytic core and F(0) containing the membrane proton channel, linked together by a central stalk and a peripheral stalk. During catalysis, ATP synthesis in the catalytic domain of F(1) is coupled via a rotary mechanism of the central stalk subunits to proton translocation (By similarity).</text>
</comment>
<comment type="function">
    <text evidence="1">Component of the F(0) channel, it forms part of the peripheral stalk, linking F(1) to F(0). The b'-subunit is a diverged and duplicated form of b found in plants and photosynthetic bacteria (By similarity).</text>
</comment>
<comment type="subunit">
    <text evidence="1">F-type ATPases have 2 components, F(1) - the catalytic core - and F(0) - the membrane proton channel. F(1) has five subunits: alpha(3), beta(3), gamma(1), delta(1), epsilon(1). F(0) has three main subunits: a(1), b(2) and c(10-14). The alpha and beta chains form an alternating ring which encloses part of the gamma chain. F(1) is attached to F(0) by a central stalk formed by the gamma and epsilon chains, while a peripheral stalk is formed by the delta and b chains (By similarity).</text>
</comment>
<comment type="subcellular location">
    <subcellularLocation>
        <location evidence="1">Cell inner membrane</location>
        <topology evidence="1">Single-pass membrane protein</topology>
    </subcellularLocation>
</comment>
<comment type="similarity">
    <text evidence="3">Belongs to the ATPase B chain family.</text>
</comment>
<keyword id="KW-0066">ATP synthesis</keyword>
<keyword id="KW-0997">Cell inner membrane</keyword>
<keyword id="KW-1003">Cell membrane</keyword>
<keyword id="KW-0138">CF(0)</keyword>
<keyword id="KW-0375">Hydrogen ion transport</keyword>
<keyword id="KW-0406">Ion transport</keyword>
<keyword id="KW-0472">Membrane</keyword>
<keyword id="KW-1185">Reference proteome</keyword>
<keyword id="KW-0812">Transmembrane</keyword>
<keyword id="KW-1133">Transmembrane helix</keyword>
<keyword id="KW-0813">Transport</keyword>
<feature type="chain" id="PRO_0000369047" description="ATP synthase subunit b 2">
    <location>
        <begin position="1"/>
        <end position="176"/>
    </location>
</feature>
<feature type="transmembrane region" description="Helical" evidence="2">
    <location>
        <begin position="29"/>
        <end position="49"/>
    </location>
</feature>
<sequence>MATETNGADVAASSPGMPQLDFSTWGNQIFWLVITLVIIYMVLSKVALPRIAAILSERQGTITNDIATAEDFKAKAKDAEAAYEKALADARAEAQRIVAEAKADIQSDLDVAISKADAEIAAKAAESEKAIAEIRAGAAEAIQQVAKDTAQEIVATFGGKADAKAVDAAVDGQLKG</sequence>
<gene>
    <name type="primary">atpF2</name>
    <name type="synonym">atpG</name>
    <name type="synonym">atpX</name>
    <name type="ordered locus">RD1_1324</name>
</gene>
<proteinExistence type="inferred from homology"/>
<name>ATPF2_ROSDO</name>
<reference key="1">
    <citation type="journal article" date="2007" name="J. Bacteriol.">
        <title>The complete genome sequence of Roseobacter denitrificans reveals a mixotrophic rather than photosynthetic metabolism.</title>
        <authorList>
            <person name="Swingley W.D."/>
            <person name="Sadekar S."/>
            <person name="Mastrian S.D."/>
            <person name="Matthies H.J."/>
            <person name="Hao J."/>
            <person name="Ramos H."/>
            <person name="Acharya C.R."/>
            <person name="Conrad A.L."/>
            <person name="Taylor H.L."/>
            <person name="Dejesa L.C."/>
            <person name="Shah M.K."/>
            <person name="O'Huallachain M.E."/>
            <person name="Lince M.T."/>
            <person name="Blankenship R.E."/>
            <person name="Beatty J.T."/>
            <person name="Touchman J.W."/>
        </authorList>
    </citation>
    <scope>NUCLEOTIDE SEQUENCE [LARGE SCALE GENOMIC DNA]</scope>
    <source>
        <strain>ATCC 33942 / OCh 114</strain>
    </source>
</reference>
<organism>
    <name type="scientific">Roseobacter denitrificans (strain ATCC 33942 / OCh 114)</name>
    <name type="common">Erythrobacter sp. (strain OCh 114)</name>
    <name type="synonym">Roseobacter denitrificans</name>
    <dbReference type="NCBI Taxonomy" id="375451"/>
    <lineage>
        <taxon>Bacteria</taxon>
        <taxon>Pseudomonadati</taxon>
        <taxon>Pseudomonadota</taxon>
        <taxon>Alphaproteobacteria</taxon>
        <taxon>Rhodobacterales</taxon>
        <taxon>Roseobacteraceae</taxon>
        <taxon>Roseobacter</taxon>
    </lineage>
</organism>